<gene>
    <name type="primary">MDV032</name>
</gene>
<organism>
    <name type="scientific">Gallid herpesvirus 2 (strain Chicken/Md5/ATCC VR-987)</name>
    <name type="common">GaHV-2</name>
    <name type="synonym">Marek's disease herpesvirus type 1</name>
    <dbReference type="NCBI Taxonomy" id="10389"/>
    <lineage>
        <taxon>Viruses</taxon>
        <taxon>Duplodnaviria</taxon>
        <taxon>Heunggongvirae</taxon>
        <taxon>Peploviricota</taxon>
        <taxon>Herviviricetes</taxon>
        <taxon>Herpesvirales</taxon>
        <taxon>Orthoherpesviridae</taxon>
        <taxon>Alphaherpesvirinae</taxon>
        <taxon>Mardivirus</taxon>
        <taxon>Mardivirus gallidalpha2</taxon>
        <taxon>Gallid alphaherpesvirus 2</taxon>
    </lineage>
</organism>
<evidence type="ECO:0000250" key="1"/>
<evidence type="ECO:0000255" key="2"/>
<evidence type="ECO:0000305" key="3"/>
<name>UL20_GAHVM</name>
<reference key="1">
    <citation type="journal article" date="2000" name="J. Virol.">
        <title>The genome of a very virulent Marek's disease virus.</title>
        <authorList>
            <person name="Tulman E.R."/>
            <person name="Afonso C.L."/>
            <person name="Lu Z."/>
            <person name="Zsak L."/>
            <person name="Rock D.L."/>
            <person name="Kutish G.F."/>
        </authorList>
    </citation>
    <scope>NUCLEOTIDE SEQUENCE [LARGE SCALE GENOMIC DNA]</scope>
</reference>
<dbReference type="EMBL" id="AF243438">
    <property type="protein sequence ID" value="AAG14212.1"/>
    <property type="molecule type" value="Genomic_DNA"/>
</dbReference>
<dbReference type="RefSeq" id="YP_001033948.1">
    <property type="nucleotide sequence ID" value="NC_002229.3"/>
</dbReference>
<dbReference type="GeneID" id="4811493"/>
<dbReference type="KEGG" id="vg:4811493"/>
<dbReference type="Proteomes" id="UP000008072">
    <property type="component" value="Segment"/>
</dbReference>
<dbReference type="GO" id="GO:0044175">
    <property type="term" value="C:host cell endosome membrane"/>
    <property type="evidence" value="ECO:0007669"/>
    <property type="project" value="UniProtKB-SubCell"/>
</dbReference>
<dbReference type="GO" id="GO:0044178">
    <property type="term" value="C:host cell Golgi membrane"/>
    <property type="evidence" value="ECO:0007669"/>
    <property type="project" value="UniProtKB-SubCell"/>
</dbReference>
<dbReference type="GO" id="GO:0044200">
    <property type="term" value="C:host cell nuclear membrane"/>
    <property type="evidence" value="ECO:0007669"/>
    <property type="project" value="UniProtKB-SubCell"/>
</dbReference>
<dbReference type="GO" id="GO:0020002">
    <property type="term" value="C:host cell plasma membrane"/>
    <property type="evidence" value="ECO:0007669"/>
    <property type="project" value="UniProtKB-SubCell"/>
</dbReference>
<dbReference type="GO" id="GO:0016020">
    <property type="term" value="C:membrane"/>
    <property type="evidence" value="ECO:0007669"/>
    <property type="project" value="UniProtKB-KW"/>
</dbReference>
<dbReference type="GO" id="GO:0044423">
    <property type="term" value="C:virion component"/>
    <property type="evidence" value="ECO:0007669"/>
    <property type="project" value="UniProtKB-KW"/>
</dbReference>
<dbReference type="GO" id="GO:0019058">
    <property type="term" value="P:viral life cycle"/>
    <property type="evidence" value="ECO:0007669"/>
    <property type="project" value="InterPro"/>
</dbReference>
<dbReference type="InterPro" id="IPR007629">
    <property type="entry name" value="Herpes_UL20"/>
</dbReference>
<dbReference type="Pfam" id="PF04544">
    <property type="entry name" value="Herpes_UL20"/>
    <property type="match status" value="1"/>
</dbReference>
<sequence length="234" mass="26583">MSKHGFGYYATEANEYTIPLDDIDDGRSDTDAKTLGSVLTQLSEEVDWDDAVDYATMSSYLGDYVFTIPNSYDIHPKFTRYVVLFGLSTFVLRPSCCLIFLFYAIYAQDNRFLILGTTITAFFYGTLMLEMYYMYANIKYDLMPLSKFQQVLIGALSMLGPIIFVAISYNMIFKDVTFMKKILAFDTNLKTSGFVIYLVMIASLAYSITSISDAIGFLLPRLWTRAVLKSCVPF</sequence>
<organismHost>
    <name type="scientific">Gallus gallus</name>
    <name type="common">Chicken</name>
    <dbReference type="NCBI Taxonomy" id="9031"/>
</organismHost>
<proteinExistence type="inferred from homology"/>
<protein>
    <recommendedName>
        <fullName>Protein UL20 homolog</fullName>
    </recommendedName>
</protein>
<feature type="chain" id="PRO_0000406525" description="Protein UL20 homolog">
    <location>
        <begin position="1"/>
        <end position="234"/>
    </location>
</feature>
<feature type="transmembrane region" description="Helical" evidence="2">
    <location>
        <begin position="82"/>
        <end position="102"/>
    </location>
</feature>
<feature type="transmembrane region" description="Helical" evidence="2">
    <location>
        <begin position="112"/>
        <end position="132"/>
    </location>
</feature>
<feature type="transmembrane region" description="Helical" evidence="2">
    <location>
        <begin position="153"/>
        <end position="173"/>
    </location>
</feature>
<feature type="transmembrane region" description="Helical" evidence="2">
    <location>
        <begin position="191"/>
        <end position="211"/>
    </location>
</feature>
<accession>Q77MS4</accession>
<comment type="function">
    <text evidence="1">Plays an essential role in egress of virus particles from the nucleus, cytoplasmic envelopment and virus-induced cell fusion. Forms a functional protein complex with gK and this interaction is absolutely essential for their coordinate intracellular transport, gK glycosylation, expression on host cell surface, and function. Together, they modulate gB-mediated virus-induced cell fusion and virion egress and therefore actively participate in these processes (By similarity).</text>
</comment>
<comment type="subunit">
    <text evidence="1">Interacts with gK (via N-terminus); this interaction plays a role in the coordinate transport of UL20 and gK to the trans-Golgi network (TGN), and is required for their cell surface expression. Interacts with gB (By similarity).</text>
</comment>
<comment type="subcellular location">
    <subcellularLocation>
        <location evidence="1">Virion</location>
    </subcellularLocation>
    <subcellularLocation>
        <location evidence="1">Host cell membrane</location>
        <topology evidence="1">Multi-pass membrane protein</topology>
    </subcellularLocation>
    <subcellularLocation>
        <location evidence="1">Host endosome membrane</location>
        <topology evidence="1">Multi-pass membrane protein</topology>
    </subcellularLocation>
    <subcellularLocation>
        <location evidence="1">Host Golgi apparatus membrane</location>
        <topology evidence="1">Multi-pass membrane protein</topology>
    </subcellularLocation>
    <subcellularLocation>
        <location evidence="1">Host nucleus membrane</location>
        <topology evidence="1">Multi-pass membrane protein</topology>
    </subcellularLocation>
    <text evidence="1">During virion morphogenesis, this protein probably accumulates in the endosomes and trans-Golgi where secondary envelopment occurs. It is probably transported with gK to the cell surface from where it is endocytosed and directed to the trans-Golgi network (TGN) (By similarity).</text>
</comment>
<comment type="similarity">
    <text evidence="3">Belongs to the alphaherpesvirinae UL20 family.</text>
</comment>
<keyword id="KW-1032">Host cell membrane</keyword>
<keyword id="KW-1039">Host endosome</keyword>
<keyword id="KW-1040">Host Golgi apparatus</keyword>
<keyword id="KW-1043">Host membrane</keyword>
<keyword id="KW-1048">Host nucleus</keyword>
<keyword id="KW-0472">Membrane</keyword>
<keyword id="KW-1185">Reference proteome</keyword>
<keyword id="KW-0812">Transmembrane</keyword>
<keyword id="KW-1133">Transmembrane helix</keyword>
<keyword id="KW-0946">Virion</keyword>